<organism>
    <name type="scientific">Mycolicibacterium smegmatis (strain ATCC 700084 / mc(2)155)</name>
    <name type="common">Mycobacterium smegmatis</name>
    <dbReference type="NCBI Taxonomy" id="246196"/>
    <lineage>
        <taxon>Bacteria</taxon>
        <taxon>Bacillati</taxon>
        <taxon>Actinomycetota</taxon>
        <taxon>Actinomycetes</taxon>
        <taxon>Mycobacteriales</taxon>
        <taxon>Mycobacteriaceae</taxon>
        <taxon>Mycolicibacterium</taxon>
    </lineage>
</organism>
<proteinExistence type="evidence at protein level"/>
<accession>A0QUX8</accession>
<accession>I7G813</accession>
<feature type="chain" id="PRO_1000050539" description="Ketol-acid reductoisomerase (NADP(+))">
    <location>
        <begin position="1"/>
        <end position="337"/>
    </location>
</feature>
<feature type="domain" description="KARI N-terminal Rossmann" evidence="2">
    <location>
        <begin position="3"/>
        <end position="183"/>
    </location>
</feature>
<feature type="domain" description="KARI C-terminal knotted" evidence="3">
    <location>
        <begin position="184"/>
        <end position="329"/>
    </location>
</feature>
<feature type="active site" evidence="1">
    <location>
        <position position="109"/>
    </location>
</feature>
<feature type="binding site" evidence="1">
    <location>
        <begin position="26"/>
        <end position="29"/>
    </location>
    <ligand>
        <name>NADP(+)</name>
        <dbReference type="ChEBI" id="CHEBI:58349"/>
    </ligand>
</feature>
<feature type="binding site" evidence="1">
    <location>
        <position position="49"/>
    </location>
    <ligand>
        <name>NADP(+)</name>
        <dbReference type="ChEBI" id="CHEBI:58349"/>
    </ligand>
</feature>
<feature type="binding site" evidence="1">
    <location>
        <position position="52"/>
    </location>
    <ligand>
        <name>NADP(+)</name>
        <dbReference type="ChEBI" id="CHEBI:58349"/>
    </ligand>
</feature>
<feature type="binding site" evidence="1">
    <location>
        <position position="54"/>
    </location>
    <ligand>
        <name>NADP(+)</name>
        <dbReference type="ChEBI" id="CHEBI:58349"/>
    </ligand>
</feature>
<feature type="binding site" evidence="1">
    <location>
        <begin position="84"/>
        <end position="87"/>
    </location>
    <ligand>
        <name>NADP(+)</name>
        <dbReference type="ChEBI" id="CHEBI:58349"/>
    </ligand>
</feature>
<feature type="binding site" evidence="1">
    <location>
        <position position="135"/>
    </location>
    <ligand>
        <name>NADP(+)</name>
        <dbReference type="ChEBI" id="CHEBI:58349"/>
    </ligand>
</feature>
<feature type="binding site" evidence="1">
    <location>
        <position position="192"/>
    </location>
    <ligand>
        <name>Mg(2+)</name>
        <dbReference type="ChEBI" id="CHEBI:18420"/>
        <label>1</label>
    </ligand>
</feature>
<feature type="binding site" evidence="1">
    <location>
        <position position="192"/>
    </location>
    <ligand>
        <name>Mg(2+)</name>
        <dbReference type="ChEBI" id="CHEBI:18420"/>
        <label>2</label>
    </ligand>
</feature>
<feature type="binding site" evidence="1">
    <location>
        <position position="196"/>
    </location>
    <ligand>
        <name>Mg(2+)</name>
        <dbReference type="ChEBI" id="CHEBI:18420"/>
        <label>1</label>
    </ligand>
</feature>
<feature type="binding site" evidence="1">
    <location>
        <position position="228"/>
    </location>
    <ligand>
        <name>Mg(2+)</name>
        <dbReference type="ChEBI" id="CHEBI:18420"/>
        <label>2</label>
    </ligand>
</feature>
<feature type="binding site" evidence="1">
    <location>
        <position position="232"/>
    </location>
    <ligand>
        <name>Mg(2+)</name>
        <dbReference type="ChEBI" id="CHEBI:18420"/>
        <label>2</label>
    </ligand>
</feature>
<feature type="binding site" evidence="1">
    <location>
        <position position="253"/>
    </location>
    <ligand>
        <name>substrate</name>
    </ligand>
</feature>
<reference key="1">
    <citation type="submission" date="2006-10" db="EMBL/GenBank/DDBJ databases">
        <authorList>
            <person name="Fleischmann R.D."/>
            <person name="Dodson R.J."/>
            <person name="Haft D.H."/>
            <person name="Merkel J.S."/>
            <person name="Nelson W.C."/>
            <person name="Fraser C.M."/>
        </authorList>
    </citation>
    <scope>NUCLEOTIDE SEQUENCE [LARGE SCALE GENOMIC DNA]</scope>
    <source>
        <strain>ATCC 700084 / mc(2)155</strain>
    </source>
</reference>
<reference key="2">
    <citation type="journal article" date="2007" name="Genome Biol.">
        <title>Interrupted coding sequences in Mycobacterium smegmatis: authentic mutations or sequencing errors?</title>
        <authorList>
            <person name="Deshayes C."/>
            <person name="Perrodou E."/>
            <person name="Gallien S."/>
            <person name="Euphrasie D."/>
            <person name="Schaeffer C."/>
            <person name="Van-Dorsselaer A."/>
            <person name="Poch O."/>
            <person name="Lecompte O."/>
            <person name="Reyrat J.-M."/>
        </authorList>
    </citation>
    <scope>NUCLEOTIDE SEQUENCE [LARGE SCALE GENOMIC DNA]</scope>
    <source>
        <strain>ATCC 700084 / mc(2)155</strain>
    </source>
</reference>
<reference key="3">
    <citation type="journal article" date="2009" name="Genome Res.">
        <title>Ortho-proteogenomics: multiple proteomes investigation through orthology and a new MS-based protocol.</title>
        <authorList>
            <person name="Gallien S."/>
            <person name="Perrodou E."/>
            <person name="Carapito C."/>
            <person name="Deshayes C."/>
            <person name="Reyrat J.-M."/>
            <person name="Van Dorsselaer A."/>
            <person name="Poch O."/>
            <person name="Schaeffer C."/>
            <person name="Lecompte O."/>
        </authorList>
    </citation>
    <scope>NUCLEOTIDE SEQUENCE [LARGE SCALE GENOMIC DNA]</scope>
    <scope>IDENTIFICATION BY MASS SPECTROMETRY [LARGE SCALE ANALYSIS]</scope>
    <source>
        <strain>ATCC 700084 / mc(2)155</strain>
    </source>
</reference>
<protein>
    <recommendedName>
        <fullName evidence="1">Ketol-acid reductoisomerase (NADP(+))</fullName>
        <shortName evidence="1">KARI</shortName>
        <ecNumber evidence="1">1.1.1.86</ecNumber>
    </recommendedName>
    <alternativeName>
        <fullName evidence="1">Acetohydroxy-acid isomeroreductase</fullName>
        <shortName evidence="1">AHIR</shortName>
    </alternativeName>
    <alternativeName>
        <fullName evidence="1">Alpha-keto-beta-hydroxylacyl reductoisomerase</fullName>
    </alternativeName>
    <alternativeName>
        <fullName evidence="1">Ketol-acid reductoisomerase type 1</fullName>
    </alternativeName>
    <alternativeName>
        <fullName evidence="1">Ketol-acid reductoisomerase type I</fullName>
    </alternativeName>
</protein>
<gene>
    <name evidence="1" type="primary">ilvC</name>
    <name type="ordered locus">MSMEG_2374</name>
    <name type="ordered locus">MSMEI_2314</name>
</gene>
<keyword id="KW-0028">Amino-acid biosynthesis</keyword>
<keyword id="KW-0100">Branched-chain amino acid biosynthesis</keyword>
<keyword id="KW-0460">Magnesium</keyword>
<keyword id="KW-0479">Metal-binding</keyword>
<keyword id="KW-0521">NADP</keyword>
<keyword id="KW-0560">Oxidoreductase</keyword>
<keyword id="KW-1185">Reference proteome</keyword>
<name>ILVC_MYCS2</name>
<sequence length="337" mass="36421">MAVEMFYDDDADLSIIQGRKVAVIGYGSQGHAHSLSLRDSGVQVKVGLKEGSKSREKAEEQGLEVDTPAEVAKWADVIMLLAPDTAQASIFTNDIEPNLEDGNALFFGHGLNIHFGLIKAPENVTVGMVAPKGPGHLVRRQFVDGKGVPCLIAIDQDPKGEGQALALSYAAAIGGARAGVIKTTFKEETETDLFGEQAVLCGGTEELIKTGFEVMVEAGYAPEMAYFEVLHELKLIVDLIYEGGIARMNYSVSDTAEFGGYLSGPRVIDADTKKRMQDILKDIQDGSFVKRLVANVEGGNKELEALRKANAEHPIEVTGKKLRDLMSWVDRPITETA</sequence>
<comment type="function">
    <text evidence="1">Involved in the biosynthesis of branched-chain amino acids (BCAA). Catalyzes an alkyl-migration followed by a ketol-acid reduction of (S)-2-acetolactate (S2AL) to yield (R)-2,3-dihydroxy-isovalerate. In the isomerase reaction, S2AL is rearranged via a Mg-dependent methyl migration to produce 3-hydroxy-3-methyl-2-ketobutyrate (HMKB). In the reductase reaction, this 2-ketoacid undergoes a metal-dependent reduction by NADPH to yield (R)-2,3-dihydroxy-isovalerate.</text>
</comment>
<comment type="catalytic activity">
    <reaction evidence="1">
        <text>(2R)-2,3-dihydroxy-3-methylbutanoate + NADP(+) = (2S)-2-acetolactate + NADPH + H(+)</text>
        <dbReference type="Rhea" id="RHEA:22068"/>
        <dbReference type="ChEBI" id="CHEBI:15378"/>
        <dbReference type="ChEBI" id="CHEBI:49072"/>
        <dbReference type="ChEBI" id="CHEBI:57783"/>
        <dbReference type="ChEBI" id="CHEBI:58349"/>
        <dbReference type="ChEBI" id="CHEBI:58476"/>
        <dbReference type="EC" id="1.1.1.86"/>
    </reaction>
</comment>
<comment type="catalytic activity">
    <reaction evidence="1">
        <text>(2R,3R)-2,3-dihydroxy-3-methylpentanoate + NADP(+) = (S)-2-ethyl-2-hydroxy-3-oxobutanoate + NADPH + H(+)</text>
        <dbReference type="Rhea" id="RHEA:13493"/>
        <dbReference type="ChEBI" id="CHEBI:15378"/>
        <dbReference type="ChEBI" id="CHEBI:49256"/>
        <dbReference type="ChEBI" id="CHEBI:49258"/>
        <dbReference type="ChEBI" id="CHEBI:57783"/>
        <dbReference type="ChEBI" id="CHEBI:58349"/>
        <dbReference type="EC" id="1.1.1.86"/>
    </reaction>
</comment>
<comment type="cofactor">
    <cofactor evidence="1">
        <name>Mg(2+)</name>
        <dbReference type="ChEBI" id="CHEBI:18420"/>
    </cofactor>
    <text evidence="1">Binds 2 magnesium ions per subunit.</text>
</comment>
<comment type="pathway">
    <text evidence="1">Amino-acid biosynthesis; L-isoleucine biosynthesis; L-isoleucine from 2-oxobutanoate: step 2/4.</text>
</comment>
<comment type="pathway">
    <text evidence="1">Amino-acid biosynthesis; L-valine biosynthesis; L-valine from pyruvate: step 2/4.</text>
</comment>
<comment type="similarity">
    <text evidence="1">Belongs to the ketol-acid reductoisomerase family.</text>
</comment>
<evidence type="ECO:0000255" key="1">
    <source>
        <dbReference type="HAMAP-Rule" id="MF_00435"/>
    </source>
</evidence>
<evidence type="ECO:0000255" key="2">
    <source>
        <dbReference type="PROSITE-ProRule" id="PRU01197"/>
    </source>
</evidence>
<evidence type="ECO:0000255" key="3">
    <source>
        <dbReference type="PROSITE-ProRule" id="PRU01198"/>
    </source>
</evidence>
<dbReference type="EC" id="1.1.1.86" evidence="1"/>
<dbReference type="EMBL" id="CP000480">
    <property type="protein sequence ID" value="ABK74365.1"/>
    <property type="molecule type" value="Genomic_DNA"/>
</dbReference>
<dbReference type="EMBL" id="CP001663">
    <property type="protein sequence ID" value="AFP38784.1"/>
    <property type="molecule type" value="Genomic_DNA"/>
</dbReference>
<dbReference type="RefSeq" id="WP_003893742.1">
    <property type="nucleotide sequence ID" value="NZ_SIJM01000012.1"/>
</dbReference>
<dbReference type="RefSeq" id="YP_886716.1">
    <property type="nucleotide sequence ID" value="NC_008596.1"/>
</dbReference>
<dbReference type="SMR" id="A0QUX8"/>
<dbReference type="STRING" id="246196.MSMEG_2374"/>
<dbReference type="PaxDb" id="246196-MSMEI_2314"/>
<dbReference type="GeneID" id="93457165"/>
<dbReference type="KEGG" id="msb:LJ00_11805"/>
<dbReference type="KEGG" id="msg:MSMEI_2314"/>
<dbReference type="KEGG" id="msm:MSMEG_2374"/>
<dbReference type="PATRIC" id="fig|246196.19.peg.2340"/>
<dbReference type="eggNOG" id="COG0059">
    <property type="taxonomic scope" value="Bacteria"/>
</dbReference>
<dbReference type="OrthoDB" id="9804088at2"/>
<dbReference type="UniPathway" id="UPA00047">
    <property type="reaction ID" value="UER00056"/>
</dbReference>
<dbReference type="UniPathway" id="UPA00049">
    <property type="reaction ID" value="UER00060"/>
</dbReference>
<dbReference type="Proteomes" id="UP000000757">
    <property type="component" value="Chromosome"/>
</dbReference>
<dbReference type="Proteomes" id="UP000006158">
    <property type="component" value="Chromosome"/>
</dbReference>
<dbReference type="GO" id="GO:0005829">
    <property type="term" value="C:cytosol"/>
    <property type="evidence" value="ECO:0007669"/>
    <property type="project" value="TreeGrafter"/>
</dbReference>
<dbReference type="GO" id="GO:0004455">
    <property type="term" value="F:ketol-acid reductoisomerase activity"/>
    <property type="evidence" value="ECO:0007669"/>
    <property type="project" value="UniProtKB-UniRule"/>
</dbReference>
<dbReference type="GO" id="GO:0000287">
    <property type="term" value="F:magnesium ion binding"/>
    <property type="evidence" value="ECO:0007669"/>
    <property type="project" value="UniProtKB-UniRule"/>
</dbReference>
<dbReference type="GO" id="GO:0050661">
    <property type="term" value="F:NADP binding"/>
    <property type="evidence" value="ECO:0007669"/>
    <property type="project" value="InterPro"/>
</dbReference>
<dbReference type="GO" id="GO:0009097">
    <property type="term" value="P:isoleucine biosynthetic process"/>
    <property type="evidence" value="ECO:0007669"/>
    <property type="project" value="UniProtKB-UniRule"/>
</dbReference>
<dbReference type="GO" id="GO:0009099">
    <property type="term" value="P:L-valine biosynthetic process"/>
    <property type="evidence" value="ECO:0007669"/>
    <property type="project" value="UniProtKB-UniRule"/>
</dbReference>
<dbReference type="FunFam" id="3.40.50.720:FF:000023">
    <property type="entry name" value="Ketol-acid reductoisomerase (NADP(+))"/>
    <property type="match status" value="1"/>
</dbReference>
<dbReference type="Gene3D" id="6.10.240.10">
    <property type="match status" value="1"/>
</dbReference>
<dbReference type="Gene3D" id="3.40.50.720">
    <property type="entry name" value="NAD(P)-binding Rossmann-like Domain"/>
    <property type="match status" value="1"/>
</dbReference>
<dbReference type="HAMAP" id="MF_00435">
    <property type="entry name" value="IlvC"/>
    <property type="match status" value="1"/>
</dbReference>
<dbReference type="InterPro" id="IPR008927">
    <property type="entry name" value="6-PGluconate_DH-like_C_sf"/>
</dbReference>
<dbReference type="InterPro" id="IPR013023">
    <property type="entry name" value="KARI"/>
</dbReference>
<dbReference type="InterPro" id="IPR000506">
    <property type="entry name" value="KARI_C"/>
</dbReference>
<dbReference type="InterPro" id="IPR013116">
    <property type="entry name" value="KARI_N"/>
</dbReference>
<dbReference type="InterPro" id="IPR014359">
    <property type="entry name" value="KARI_prok"/>
</dbReference>
<dbReference type="InterPro" id="IPR036291">
    <property type="entry name" value="NAD(P)-bd_dom_sf"/>
</dbReference>
<dbReference type="NCBIfam" id="TIGR00465">
    <property type="entry name" value="ilvC"/>
    <property type="match status" value="1"/>
</dbReference>
<dbReference type="NCBIfam" id="NF004017">
    <property type="entry name" value="PRK05479.1"/>
    <property type="match status" value="1"/>
</dbReference>
<dbReference type="PANTHER" id="PTHR21371">
    <property type="entry name" value="KETOL-ACID REDUCTOISOMERASE, MITOCHONDRIAL"/>
    <property type="match status" value="1"/>
</dbReference>
<dbReference type="PANTHER" id="PTHR21371:SF1">
    <property type="entry name" value="KETOL-ACID REDUCTOISOMERASE, MITOCHONDRIAL"/>
    <property type="match status" value="1"/>
</dbReference>
<dbReference type="Pfam" id="PF01450">
    <property type="entry name" value="KARI_C"/>
    <property type="match status" value="1"/>
</dbReference>
<dbReference type="Pfam" id="PF07991">
    <property type="entry name" value="KARI_N"/>
    <property type="match status" value="1"/>
</dbReference>
<dbReference type="PIRSF" id="PIRSF000116">
    <property type="entry name" value="IlvC_gammaproteo"/>
    <property type="match status" value="1"/>
</dbReference>
<dbReference type="SUPFAM" id="SSF48179">
    <property type="entry name" value="6-phosphogluconate dehydrogenase C-terminal domain-like"/>
    <property type="match status" value="1"/>
</dbReference>
<dbReference type="SUPFAM" id="SSF51735">
    <property type="entry name" value="NAD(P)-binding Rossmann-fold domains"/>
    <property type="match status" value="1"/>
</dbReference>
<dbReference type="PROSITE" id="PS51851">
    <property type="entry name" value="KARI_C"/>
    <property type="match status" value="1"/>
</dbReference>
<dbReference type="PROSITE" id="PS51850">
    <property type="entry name" value="KARI_N"/>
    <property type="match status" value="1"/>
</dbReference>